<proteinExistence type="inferred from homology"/>
<comment type="function">
    <text evidence="1">An accessory protein needed during the final step in the assembly of 30S ribosomal subunit, possibly for assembly of the head region. Essential for efficient processing of 16S rRNA. May be needed both before and after RbfA during the maturation of 16S rRNA. It has affinity for free ribosomal 30S subunits but not for 70S ribosomes.</text>
</comment>
<comment type="subunit">
    <text evidence="1">Binds ribosomal protein uS19.</text>
</comment>
<comment type="subcellular location">
    <subcellularLocation>
        <location evidence="1">Cytoplasm</location>
    </subcellularLocation>
</comment>
<comment type="domain">
    <text evidence="1">The PRC barrel domain binds ribosomal protein uS19.</text>
</comment>
<comment type="similarity">
    <text evidence="1">Belongs to the RimM family.</text>
</comment>
<reference key="1">
    <citation type="journal article" date="2001" name="Genome Res.">
        <title>The complete genome sequence of the lactic acid bacterium Lactococcus lactis ssp. lactis IL1403.</title>
        <authorList>
            <person name="Bolotin A."/>
            <person name="Wincker P."/>
            <person name="Mauger S."/>
            <person name="Jaillon O."/>
            <person name="Malarme K."/>
            <person name="Weissenbach J."/>
            <person name="Ehrlich S.D."/>
            <person name="Sorokin A."/>
        </authorList>
    </citation>
    <scope>NUCLEOTIDE SEQUENCE [LARGE SCALE GENOMIC DNA]</scope>
    <source>
        <strain>IL1403</strain>
    </source>
</reference>
<evidence type="ECO:0000255" key="1">
    <source>
        <dbReference type="HAMAP-Rule" id="MF_00014"/>
    </source>
</evidence>
<gene>
    <name evidence="1" type="primary">rimM</name>
    <name type="ordered locus">LL1565</name>
    <name type="ORF">L6876</name>
</gene>
<name>RIMM_LACLA</name>
<feature type="chain" id="PRO_0000163304" description="Ribosome maturation factor RimM">
    <location>
        <begin position="1"/>
        <end position="171"/>
    </location>
</feature>
<feature type="domain" description="PRC barrel" evidence="1">
    <location>
        <begin position="97"/>
        <end position="169"/>
    </location>
</feature>
<organism>
    <name type="scientific">Lactococcus lactis subsp. lactis (strain IL1403)</name>
    <name type="common">Streptococcus lactis</name>
    <dbReference type="NCBI Taxonomy" id="272623"/>
    <lineage>
        <taxon>Bacteria</taxon>
        <taxon>Bacillati</taxon>
        <taxon>Bacillota</taxon>
        <taxon>Bacilli</taxon>
        <taxon>Lactobacillales</taxon>
        <taxon>Streptococcaceae</taxon>
        <taxon>Lactococcus</taxon>
    </lineage>
</organism>
<sequence>MEKFYKVGTIVNTQGLQGEVRVMPSTDFAQERFSKGSVLALFDDKDNYIQDLKVKSGRPQKNFYVVKFEGFYHINDVEKYKGYIVKIAEENQEDLDDGEFYYHEIIGSDVYENDILIGQISEILQPGANDVWVVKRKGKRDLLLPYIPPVILNVDVNQHRVDVSIMEGLDD</sequence>
<accession>Q9CFB6</accession>
<dbReference type="EMBL" id="AE005176">
    <property type="protein sequence ID" value="AAK05663.1"/>
    <property type="molecule type" value="Genomic_DNA"/>
</dbReference>
<dbReference type="PIR" id="E86820">
    <property type="entry name" value="E86820"/>
</dbReference>
<dbReference type="RefSeq" id="NP_267721.1">
    <property type="nucleotide sequence ID" value="NC_002662.1"/>
</dbReference>
<dbReference type="RefSeq" id="WP_003130707.1">
    <property type="nucleotide sequence ID" value="NC_002662.1"/>
</dbReference>
<dbReference type="SMR" id="Q9CFB6"/>
<dbReference type="PaxDb" id="272623-L6876"/>
<dbReference type="EnsemblBacteria" id="AAK05663">
    <property type="protein sequence ID" value="AAK05663"/>
    <property type="gene ID" value="L6876"/>
</dbReference>
<dbReference type="KEGG" id="lla:L6876"/>
<dbReference type="PATRIC" id="fig|272623.7.peg.1683"/>
<dbReference type="eggNOG" id="COG0806">
    <property type="taxonomic scope" value="Bacteria"/>
</dbReference>
<dbReference type="HOGENOM" id="CLU_077636_3_1_9"/>
<dbReference type="OrthoDB" id="9810331at2"/>
<dbReference type="Proteomes" id="UP000002196">
    <property type="component" value="Chromosome"/>
</dbReference>
<dbReference type="GO" id="GO:0005737">
    <property type="term" value="C:cytoplasm"/>
    <property type="evidence" value="ECO:0007669"/>
    <property type="project" value="UniProtKB-SubCell"/>
</dbReference>
<dbReference type="GO" id="GO:0005840">
    <property type="term" value="C:ribosome"/>
    <property type="evidence" value="ECO:0007669"/>
    <property type="project" value="InterPro"/>
</dbReference>
<dbReference type="GO" id="GO:0043022">
    <property type="term" value="F:ribosome binding"/>
    <property type="evidence" value="ECO:0007669"/>
    <property type="project" value="InterPro"/>
</dbReference>
<dbReference type="GO" id="GO:0042274">
    <property type="term" value="P:ribosomal small subunit biogenesis"/>
    <property type="evidence" value="ECO:0007669"/>
    <property type="project" value="UniProtKB-UniRule"/>
</dbReference>
<dbReference type="GO" id="GO:0006364">
    <property type="term" value="P:rRNA processing"/>
    <property type="evidence" value="ECO:0007669"/>
    <property type="project" value="UniProtKB-UniRule"/>
</dbReference>
<dbReference type="Gene3D" id="2.30.30.240">
    <property type="entry name" value="PRC-barrel domain"/>
    <property type="match status" value="1"/>
</dbReference>
<dbReference type="Gene3D" id="2.40.30.60">
    <property type="entry name" value="RimM"/>
    <property type="match status" value="1"/>
</dbReference>
<dbReference type="HAMAP" id="MF_00014">
    <property type="entry name" value="Ribosome_mat_RimM"/>
    <property type="match status" value="1"/>
</dbReference>
<dbReference type="InterPro" id="IPR027275">
    <property type="entry name" value="PRC-brl_dom"/>
</dbReference>
<dbReference type="InterPro" id="IPR011033">
    <property type="entry name" value="PRC_barrel-like_sf"/>
</dbReference>
<dbReference type="InterPro" id="IPR011961">
    <property type="entry name" value="RimM"/>
</dbReference>
<dbReference type="InterPro" id="IPR002676">
    <property type="entry name" value="RimM_N"/>
</dbReference>
<dbReference type="InterPro" id="IPR036976">
    <property type="entry name" value="RimM_N_sf"/>
</dbReference>
<dbReference type="InterPro" id="IPR009000">
    <property type="entry name" value="Transl_B-barrel_sf"/>
</dbReference>
<dbReference type="NCBIfam" id="TIGR02273">
    <property type="entry name" value="16S_RimM"/>
    <property type="match status" value="1"/>
</dbReference>
<dbReference type="PANTHER" id="PTHR33692">
    <property type="entry name" value="RIBOSOME MATURATION FACTOR RIMM"/>
    <property type="match status" value="1"/>
</dbReference>
<dbReference type="PANTHER" id="PTHR33692:SF1">
    <property type="entry name" value="RIBOSOME MATURATION FACTOR RIMM"/>
    <property type="match status" value="1"/>
</dbReference>
<dbReference type="Pfam" id="PF05239">
    <property type="entry name" value="PRC"/>
    <property type="match status" value="1"/>
</dbReference>
<dbReference type="Pfam" id="PF01782">
    <property type="entry name" value="RimM"/>
    <property type="match status" value="1"/>
</dbReference>
<dbReference type="SUPFAM" id="SSF50346">
    <property type="entry name" value="PRC-barrel domain"/>
    <property type="match status" value="1"/>
</dbReference>
<dbReference type="SUPFAM" id="SSF50447">
    <property type="entry name" value="Translation proteins"/>
    <property type="match status" value="1"/>
</dbReference>
<protein>
    <recommendedName>
        <fullName evidence="1">Ribosome maturation factor RimM</fullName>
    </recommendedName>
</protein>
<keyword id="KW-0143">Chaperone</keyword>
<keyword id="KW-0963">Cytoplasm</keyword>
<keyword id="KW-1185">Reference proteome</keyword>
<keyword id="KW-0690">Ribosome biogenesis</keyword>
<keyword id="KW-0698">rRNA processing</keyword>